<dbReference type="EC" id="2.7.2.1" evidence="1"/>
<dbReference type="EMBL" id="CP000716">
    <property type="protein sequence ID" value="ABR31120.1"/>
    <property type="molecule type" value="Genomic_DNA"/>
</dbReference>
<dbReference type="RefSeq" id="WP_012057479.1">
    <property type="nucleotide sequence ID" value="NC_009616.1"/>
</dbReference>
<dbReference type="SMR" id="A6LMG9"/>
<dbReference type="STRING" id="391009.Tmel_1271"/>
<dbReference type="KEGG" id="tme:Tmel_1271"/>
<dbReference type="eggNOG" id="COG0282">
    <property type="taxonomic scope" value="Bacteria"/>
</dbReference>
<dbReference type="HOGENOM" id="CLU_020352_0_1_0"/>
<dbReference type="OrthoDB" id="9802453at2"/>
<dbReference type="UniPathway" id="UPA00340">
    <property type="reaction ID" value="UER00458"/>
</dbReference>
<dbReference type="Proteomes" id="UP000001110">
    <property type="component" value="Chromosome"/>
</dbReference>
<dbReference type="GO" id="GO:0005737">
    <property type="term" value="C:cytoplasm"/>
    <property type="evidence" value="ECO:0007669"/>
    <property type="project" value="UniProtKB-SubCell"/>
</dbReference>
<dbReference type="GO" id="GO:0008776">
    <property type="term" value="F:acetate kinase activity"/>
    <property type="evidence" value="ECO:0007669"/>
    <property type="project" value="UniProtKB-UniRule"/>
</dbReference>
<dbReference type="GO" id="GO:0005524">
    <property type="term" value="F:ATP binding"/>
    <property type="evidence" value="ECO:0007669"/>
    <property type="project" value="UniProtKB-KW"/>
</dbReference>
<dbReference type="GO" id="GO:0000287">
    <property type="term" value="F:magnesium ion binding"/>
    <property type="evidence" value="ECO:0007669"/>
    <property type="project" value="UniProtKB-UniRule"/>
</dbReference>
<dbReference type="GO" id="GO:0006083">
    <property type="term" value="P:acetate metabolic process"/>
    <property type="evidence" value="ECO:0007669"/>
    <property type="project" value="TreeGrafter"/>
</dbReference>
<dbReference type="GO" id="GO:0006085">
    <property type="term" value="P:acetyl-CoA biosynthetic process"/>
    <property type="evidence" value="ECO:0007669"/>
    <property type="project" value="UniProtKB-UniRule"/>
</dbReference>
<dbReference type="CDD" id="cd24010">
    <property type="entry name" value="ASKHA_NBD_AcK_PK"/>
    <property type="match status" value="1"/>
</dbReference>
<dbReference type="Gene3D" id="3.30.420.40">
    <property type="match status" value="2"/>
</dbReference>
<dbReference type="HAMAP" id="MF_00020">
    <property type="entry name" value="Acetate_kinase"/>
    <property type="match status" value="1"/>
</dbReference>
<dbReference type="InterPro" id="IPR004372">
    <property type="entry name" value="Ac/propionate_kinase"/>
</dbReference>
<dbReference type="InterPro" id="IPR000890">
    <property type="entry name" value="Aliphatic_acid_kin_short-chain"/>
</dbReference>
<dbReference type="InterPro" id="IPR023865">
    <property type="entry name" value="Aliphatic_acid_kinase_CS"/>
</dbReference>
<dbReference type="InterPro" id="IPR043129">
    <property type="entry name" value="ATPase_NBD"/>
</dbReference>
<dbReference type="NCBIfam" id="TIGR00016">
    <property type="entry name" value="ackA"/>
    <property type="match status" value="1"/>
</dbReference>
<dbReference type="PANTHER" id="PTHR21060">
    <property type="entry name" value="ACETATE KINASE"/>
    <property type="match status" value="1"/>
</dbReference>
<dbReference type="PANTHER" id="PTHR21060:SF15">
    <property type="entry name" value="ACETATE KINASE-RELATED"/>
    <property type="match status" value="1"/>
</dbReference>
<dbReference type="Pfam" id="PF00871">
    <property type="entry name" value="Acetate_kinase"/>
    <property type="match status" value="1"/>
</dbReference>
<dbReference type="PIRSF" id="PIRSF000722">
    <property type="entry name" value="Acetate_prop_kin"/>
    <property type="match status" value="1"/>
</dbReference>
<dbReference type="PRINTS" id="PR00471">
    <property type="entry name" value="ACETATEKNASE"/>
</dbReference>
<dbReference type="SUPFAM" id="SSF53067">
    <property type="entry name" value="Actin-like ATPase domain"/>
    <property type="match status" value="2"/>
</dbReference>
<dbReference type="PROSITE" id="PS01075">
    <property type="entry name" value="ACETATE_KINASE_1"/>
    <property type="match status" value="1"/>
</dbReference>
<dbReference type="PROSITE" id="PS01076">
    <property type="entry name" value="ACETATE_KINASE_2"/>
    <property type="match status" value="1"/>
</dbReference>
<sequence>MIVLVVNSGSSSIKYQLLDMDNEKVLCKGLAERIGIPGSRIVHKKAGEKFIVEKPMPNHDEALKIVLEVLKDEKLGAIKDFKEIDAVGHRVVHGGEKFSGSVLIDDEVIKAIEEFSYLAPLHNPPNLMGIKAIMKLLPGVPNIGVFDTAFHAKMPEKAYLYAIPYEFYEKYKIRRYGFHGTSHRYVSKRTAEILGLDYNKAKIVTVHLGNGASIAAVKNGKSVDTSMGFTPLEGLVMGTRSGDLDPSIVTFLMEKEGLSAEEVYTILNKKSGVLGLSKNFSSDMRDIEDKALENDPLCRLVLDIYEYRIAKYIGAYAAAMNGVDAISFTAGVGENSPITREEICVNYLSFLGIKIDKEKNNVKGEERIISTPDSKVKVLVVPTNEELMIARDTKEIIEKGLKQLEY</sequence>
<feature type="chain" id="PRO_1000002281" description="Acetate kinase">
    <location>
        <begin position="1"/>
        <end position="406"/>
    </location>
</feature>
<feature type="active site" description="Proton donor/acceptor" evidence="1">
    <location>
        <position position="147"/>
    </location>
</feature>
<feature type="binding site" evidence="1">
    <location>
        <position position="7"/>
    </location>
    <ligand>
        <name>Mg(2+)</name>
        <dbReference type="ChEBI" id="CHEBI:18420"/>
    </ligand>
</feature>
<feature type="binding site" evidence="1">
    <location>
        <position position="14"/>
    </location>
    <ligand>
        <name>ATP</name>
        <dbReference type="ChEBI" id="CHEBI:30616"/>
    </ligand>
</feature>
<feature type="binding site" evidence="1">
    <location>
        <position position="90"/>
    </location>
    <ligand>
        <name>substrate</name>
    </ligand>
</feature>
<feature type="binding site" evidence="1">
    <location>
        <begin position="207"/>
        <end position="211"/>
    </location>
    <ligand>
        <name>ATP</name>
        <dbReference type="ChEBI" id="CHEBI:30616"/>
    </ligand>
</feature>
<feature type="binding site" evidence="1">
    <location>
        <begin position="283"/>
        <end position="285"/>
    </location>
    <ligand>
        <name>ATP</name>
        <dbReference type="ChEBI" id="CHEBI:30616"/>
    </ligand>
</feature>
<feature type="binding site" evidence="1">
    <location>
        <begin position="331"/>
        <end position="335"/>
    </location>
    <ligand>
        <name>ATP</name>
        <dbReference type="ChEBI" id="CHEBI:30616"/>
    </ligand>
</feature>
<feature type="binding site" evidence="1">
    <location>
        <position position="385"/>
    </location>
    <ligand>
        <name>Mg(2+)</name>
        <dbReference type="ChEBI" id="CHEBI:18420"/>
    </ligand>
</feature>
<feature type="site" description="Transition state stabilizer" evidence="1">
    <location>
        <position position="179"/>
    </location>
</feature>
<feature type="site" description="Transition state stabilizer" evidence="1">
    <location>
        <position position="240"/>
    </location>
</feature>
<organism>
    <name type="scientific">Thermosipho melanesiensis (strain DSM 12029 / CIP 104789 / BI429)</name>
    <dbReference type="NCBI Taxonomy" id="391009"/>
    <lineage>
        <taxon>Bacteria</taxon>
        <taxon>Thermotogati</taxon>
        <taxon>Thermotogota</taxon>
        <taxon>Thermotogae</taxon>
        <taxon>Thermotogales</taxon>
        <taxon>Fervidobacteriaceae</taxon>
        <taxon>Thermosipho</taxon>
    </lineage>
</organism>
<name>ACKA_THEM4</name>
<accession>A6LMG9</accession>
<keyword id="KW-0067">ATP-binding</keyword>
<keyword id="KW-0963">Cytoplasm</keyword>
<keyword id="KW-0418">Kinase</keyword>
<keyword id="KW-0460">Magnesium</keyword>
<keyword id="KW-0479">Metal-binding</keyword>
<keyword id="KW-0547">Nucleotide-binding</keyword>
<keyword id="KW-0808">Transferase</keyword>
<protein>
    <recommendedName>
        <fullName evidence="1">Acetate kinase</fullName>
        <ecNumber evidence="1">2.7.2.1</ecNumber>
    </recommendedName>
    <alternativeName>
        <fullName evidence="1">Acetokinase</fullName>
    </alternativeName>
</protein>
<evidence type="ECO:0000255" key="1">
    <source>
        <dbReference type="HAMAP-Rule" id="MF_00020"/>
    </source>
</evidence>
<comment type="function">
    <text evidence="1">Catalyzes the formation of acetyl phosphate from acetate and ATP. Can also catalyze the reverse reaction.</text>
</comment>
<comment type="catalytic activity">
    <reaction evidence="1">
        <text>acetate + ATP = acetyl phosphate + ADP</text>
        <dbReference type="Rhea" id="RHEA:11352"/>
        <dbReference type="ChEBI" id="CHEBI:22191"/>
        <dbReference type="ChEBI" id="CHEBI:30089"/>
        <dbReference type="ChEBI" id="CHEBI:30616"/>
        <dbReference type="ChEBI" id="CHEBI:456216"/>
        <dbReference type="EC" id="2.7.2.1"/>
    </reaction>
</comment>
<comment type="cofactor">
    <cofactor evidence="1">
        <name>Mg(2+)</name>
        <dbReference type="ChEBI" id="CHEBI:18420"/>
    </cofactor>
    <cofactor evidence="1">
        <name>Mn(2+)</name>
        <dbReference type="ChEBI" id="CHEBI:29035"/>
    </cofactor>
    <text evidence="1">Mg(2+). Can also accept Mn(2+).</text>
</comment>
<comment type="pathway">
    <text evidence="1">Metabolic intermediate biosynthesis; acetyl-CoA biosynthesis; acetyl-CoA from acetate: step 1/2.</text>
</comment>
<comment type="subunit">
    <text evidence="1">Homodimer.</text>
</comment>
<comment type="subcellular location">
    <subcellularLocation>
        <location evidence="1">Cytoplasm</location>
    </subcellularLocation>
</comment>
<comment type="similarity">
    <text evidence="1">Belongs to the acetokinase family.</text>
</comment>
<reference key="1">
    <citation type="submission" date="2007-05" db="EMBL/GenBank/DDBJ databases">
        <title>Complete sequence of Thermosipho melanesiensis BI429.</title>
        <authorList>
            <consortium name="US DOE Joint Genome Institute"/>
            <person name="Copeland A."/>
            <person name="Lucas S."/>
            <person name="Lapidus A."/>
            <person name="Barry K."/>
            <person name="Glavina del Rio T."/>
            <person name="Dalin E."/>
            <person name="Tice H."/>
            <person name="Pitluck S."/>
            <person name="Chertkov O."/>
            <person name="Brettin T."/>
            <person name="Bruce D."/>
            <person name="Detter J.C."/>
            <person name="Han C."/>
            <person name="Schmutz J."/>
            <person name="Larimer F."/>
            <person name="Land M."/>
            <person name="Hauser L."/>
            <person name="Kyrpides N."/>
            <person name="Mikhailova N."/>
            <person name="Nelson K."/>
            <person name="Gogarten J.P."/>
            <person name="Noll K."/>
            <person name="Richardson P."/>
        </authorList>
    </citation>
    <scope>NUCLEOTIDE SEQUENCE [LARGE SCALE GENOMIC DNA]</scope>
    <source>
        <strain>DSM 12029 / CIP 104789 / BI429</strain>
    </source>
</reference>
<proteinExistence type="inferred from homology"/>
<gene>
    <name evidence="1" type="primary">ackA</name>
    <name type="ordered locus">Tmel_1271</name>
</gene>